<proteinExistence type="evidence at transcript level"/>
<sequence length="344" mass="38017">MACEPQMDPGGAAGPLPTSSPGWSPLPGGSPPGWGQELRSGQVLTVLRIDNTCAPISFDLGAAEEQLQTWGIQVPADQYRSLAESALLEPQVRRYIIYNSRPMRLAFAVVFYVVVWANIYSTSQMFALGNHWAGVLLVTLAATSLTLTLVVIFERHQRKANTNTDLRLTAANGALLRHRVLLGVTDTVEGCQSVIQLWFVYFDLETCAQFLSDHIREMKMSQESLLRSRLSQLCVVMETGVSPTANEGPENLLEETPLLPDRPGSTEKPLMQTELRQLVPEAEPEEMAQQLLAVFGGYYTRLLVTSQLPQALGTRHMDSPRIPCPCQLIEAYILGTECCPFLTR</sequence>
<feature type="chain" id="PRO_0000279424" description="Transmembrane protein 268">
    <location>
        <begin position="1"/>
        <end position="344"/>
    </location>
</feature>
<feature type="transmembrane region" description="Helical" evidence="2">
    <location>
        <begin position="106"/>
        <end position="126"/>
    </location>
</feature>
<feature type="transmembrane region" description="Helical" evidence="2">
    <location>
        <begin position="133"/>
        <end position="153"/>
    </location>
</feature>
<feature type="region of interest" description="Disordered" evidence="3">
    <location>
        <begin position="1"/>
        <end position="31"/>
    </location>
</feature>
<feature type="region of interest" description="Disordered" evidence="3">
    <location>
        <begin position="244"/>
        <end position="266"/>
    </location>
</feature>
<feature type="compositionally biased region" description="Low complexity" evidence="3">
    <location>
        <begin position="14"/>
        <end position="27"/>
    </location>
</feature>
<feature type="compositionally biased region" description="Low complexity" evidence="3">
    <location>
        <begin position="247"/>
        <end position="259"/>
    </location>
</feature>
<gene>
    <name type="primary">TMEM268</name>
</gene>
<dbReference type="EMBL" id="BT020721">
    <property type="protein sequence ID" value="AAX08738.1"/>
    <property type="molecule type" value="mRNA"/>
</dbReference>
<dbReference type="EMBL" id="BC133593">
    <property type="protein sequence ID" value="AAI33594.1"/>
    <property type="molecule type" value="mRNA"/>
</dbReference>
<dbReference type="RefSeq" id="NP_001019732.1">
    <property type="nucleotide sequence ID" value="NM_001024561.2"/>
</dbReference>
<dbReference type="RefSeq" id="XP_005210596.1">
    <property type="nucleotide sequence ID" value="XM_005210539.3"/>
</dbReference>
<dbReference type="RefSeq" id="XP_005210597.1">
    <property type="nucleotide sequence ID" value="XM_005210540.3"/>
</dbReference>
<dbReference type="RefSeq" id="XP_005210598.1">
    <property type="nucleotide sequence ID" value="XM_005210541.3"/>
</dbReference>
<dbReference type="RefSeq" id="XP_015328176.1">
    <property type="nucleotide sequence ID" value="XM_015472690.1"/>
</dbReference>
<dbReference type="FunCoup" id="Q5EA48">
    <property type="interactions" value="446"/>
</dbReference>
<dbReference type="STRING" id="9913.ENSBTAP00000048776"/>
<dbReference type="PaxDb" id="9913-ENSBTAP00000048776"/>
<dbReference type="GeneID" id="535122"/>
<dbReference type="KEGG" id="bta:535122"/>
<dbReference type="CTD" id="203197"/>
<dbReference type="eggNOG" id="ENOG502R635">
    <property type="taxonomic scope" value="Eukaryota"/>
</dbReference>
<dbReference type="HOGENOM" id="CLU_067585_1_0_1"/>
<dbReference type="InParanoid" id="Q5EA48"/>
<dbReference type="OrthoDB" id="8250049at2759"/>
<dbReference type="TreeFam" id="TF353168"/>
<dbReference type="Proteomes" id="UP000009136">
    <property type="component" value="Unplaced"/>
</dbReference>
<dbReference type="GO" id="GO:0005886">
    <property type="term" value="C:plasma membrane"/>
    <property type="evidence" value="ECO:0007669"/>
    <property type="project" value="UniProtKB-SubCell"/>
</dbReference>
<dbReference type="InterPro" id="IPR028054">
    <property type="entry name" value="DUF4481"/>
</dbReference>
<dbReference type="PANTHER" id="PTHR31193:SF1">
    <property type="entry name" value="TRANSMEMBRANE PROTEIN 268"/>
    <property type="match status" value="1"/>
</dbReference>
<dbReference type="PANTHER" id="PTHR31193">
    <property type="entry name" value="TRANSMEMBRANE PROTEIN C9ORF91"/>
    <property type="match status" value="1"/>
</dbReference>
<dbReference type="Pfam" id="PF14800">
    <property type="entry name" value="DUF4481"/>
    <property type="match status" value="1"/>
</dbReference>
<keyword id="KW-1003">Cell membrane</keyword>
<keyword id="KW-0472">Membrane</keyword>
<keyword id="KW-1185">Reference proteome</keyword>
<keyword id="KW-0812">Transmembrane</keyword>
<keyword id="KW-1133">Transmembrane helix</keyword>
<evidence type="ECO:0000250" key="1">
    <source>
        <dbReference type="UniProtKB" id="Q5VZI3"/>
    </source>
</evidence>
<evidence type="ECO:0000255" key="2"/>
<evidence type="ECO:0000256" key="3">
    <source>
        <dbReference type="SAM" id="MobiDB-lite"/>
    </source>
</evidence>
<reference key="1">
    <citation type="journal article" date="2005" name="BMC Genomics">
        <title>Characterization of 954 bovine full-CDS cDNA sequences.</title>
        <authorList>
            <person name="Harhay G.P."/>
            <person name="Sonstegard T.S."/>
            <person name="Keele J.W."/>
            <person name="Heaton M.P."/>
            <person name="Clawson M.L."/>
            <person name="Snelling W.M."/>
            <person name="Wiedmann R.T."/>
            <person name="Van Tassell C.P."/>
            <person name="Smith T.P.L."/>
        </authorList>
    </citation>
    <scope>NUCLEOTIDE SEQUENCE [LARGE SCALE MRNA]</scope>
</reference>
<reference key="2">
    <citation type="submission" date="2007-02" db="EMBL/GenBank/DDBJ databases">
        <authorList>
            <consortium name="NIH - Mammalian Gene Collection (MGC) project"/>
        </authorList>
    </citation>
    <scope>NUCLEOTIDE SEQUENCE [LARGE SCALE MRNA]</scope>
    <source>
        <strain>Hereford</strain>
        <tissue>Thymus</tissue>
    </source>
</reference>
<accession>Q5EA48</accession>
<accession>A2VE64</accession>
<comment type="function">
    <text evidence="1">Stabilizes cell surface expression of ITGAM and participates in the adhesion and migration of phagocytes during bacterial clearance.</text>
</comment>
<comment type="subunit">
    <text evidence="1">Interacts with ITGAM; this interaction inhibits ITGAM degradation via the endosome-lysosome pathway. Interacts with ITGB4; this interaction prevents ITGB4 degradation.</text>
</comment>
<comment type="subcellular location">
    <subcellularLocation>
        <location evidence="1">Cell membrane</location>
        <topology evidence="1">Multi-pass membrane protein</topology>
    </subcellularLocation>
</comment>
<protein>
    <recommendedName>
        <fullName>Transmembrane protein 268</fullName>
    </recommendedName>
</protein>
<organism>
    <name type="scientific">Bos taurus</name>
    <name type="common">Bovine</name>
    <dbReference type="NCBI Taxonomy" id="9913"/>
    <lineage>
        <taxon>Eukaryota</taxon>
        <taxon>Metazoa</taxon>
        <taxon>Chordata</taxon>
        <taxon>Craniata</taxon>
        <taxon>Vertebrata</taxon>
        <taxon>Euteleostomi</taxon>
        <taxon>Mammalia</taxon>
        <taxon>Eutheria</taxon>
        <taxon>Laurasiatheria</taxon>
        <taxon>Artiodactyla</taxon>
        <taxon>Ruminantia</taxon>
        <taxon>Pecora</taxon>
        <taxon>Bovidae</taxon>
        <taxon>Bovinae</taxon>
        <taxon>Bos</taxon>
    </lineage>
</organism>
<name>TM268_BOVIN</name>